<sequence length="227" mass="24949">MPTLEIAQKKLEFIKKAEEYYNALCTNIQLSGDKLKVISVTSVNPGEGKTTTSVNIARSFARAGYKTLLIDGDTRNSVMSGFFKSREKITGLTEFLSGTADLSHGLCDTNIENLFVVQSGTVSPNPTALLQSKNFNDMIETLRKYFDYIIVDTAPIGIVIDAAIITQKCDASILVTATGEVNKRDVQKAKQQLEQTGKLFLGVVFNKLDISVDKYGVYGFYGNYGKK</sequence>
<feature type="chain" id="PRO_0000217240" description="Tyrosine-protein kinase CpsD">
    <location>
        <begin position="1"/>
        <end position="227"/>
    </location>
</feature>
<feature type="sequence variant" description="In strain: NCTC 11906 and PO-329.">
    <original>I</original>
    <variation>V</variation>
    <location>
        <position position="14"/>
    </location>
</feature>
<feature type="sequence variant" description="In strain: NCTC 11906 and PO-329.">
    <original>T</original>
    <variation>I</variation>
    <location>
        <position position="74"/>
    </location>
</feature>
<name>CPSD_STREE</name>
<protein>
    <recommendedName>
        <fullName>Tyrosine-protein kinase CpsD</fullName>
        <ecNumber>2.7.10.2</ecNumber>
    </recommendedName>
</protein>
<gene>
    <name type="primary">cpsD</name>
    <name type="synonym">cps19fD</name>
</gene>
<keyword id="KW-0067">ATP-binding</keyword>
<keyword id="KW-0972">Capsule biogenesis/degradation</keyword>
<keyword id="KW-0963">Cytoplasm</keyword>
<keyword id="KW-0270">Exopolysaccharide synthesis</keyword>
<keyword id="KW-0418">Kinase</keyword>
<keyword id="KW-0547">Nucleotide-binding</keyword>
<keyword id="KW-0597">Phosphoprotein</keyword>
<keyword id="KW-0808">Transferase</keyword>
<keyword id="KW-0829">Tyrosine-protein kinase</keyword>
<accession>Q54520</accession>
<accession>O52234</accession>
<proteinExistence type="evidence at protein level"/>
<comment type="function">
    <text>Involved in the regulation of capsular polysaccharide biosynthesis. Autophosphorylation of CpsD attenuates its activity and reduces the level of encapsulation. May be part of a complex that directs the coordinated polymerization and export to the cell surface of the capsular polysaccharide.</text>
</comment>
<comment type="catalytic activity">
    <reaction>
        <text>L-tyrosyl-[protein] + ATP = O-phospho-L-tyrosyl-[protein] + ADP + H(+)</text>
        <dbReference type="Rhea" id="RHEA:10596"/>
        <dbReference type="Rhea" id="RHEA-COMP:10136"/>
        <dbReference type="Rhea" id="RHEA-COMP:20101"/>
        <dbReference type="ChEBI" id="CHEBI:15378"/>
        <dbReference type="ChEBI" id="CHEBI:30616"/>
        <dbReference type="ChEBI" id="CHEBI:46858"/>
        <dbReference type="ChEBI" id="CHEBI:61978"/>
        <dbReference type="ChEBI" id="CHEBI:456216"/>
        <dbReference type="EC" id="2.7.10.2"/>
    </reaction>
</comment>
<comment type="activity regulation">
    <text>Dephosphorylated and activated by CpsB.</text>
</comment>
<comment type="pathway">
    <text>Capsule biogenesis; capsule polysaccharide biosynthesis.</text>
</comment>
<comment type="subcellular location">
    <subcellularLocation>
        <location evidence="1">Cytoplasm</location>
    </subcellularLocation>
</comment>
<comment type="PTM">
    <text>Autophosphorylated.</text>
</comment>
<comment type="similarity">
    <text evidence="1">Belongs to the CpsD/CapB family.</text>
</comment>
<reference key="1">
    <citation type="journal article" date="1994" name="Infect. Immun.">
        <title>Nucleotide sequence analysis of genes essential for capsular polysaccharide biosynthesis in Streptococcus pneumoniae type 19F.</title>
        <authorList>
            <person name="Guidolin A."/>
            <person name="Morona J.K."/>
            <person name="Morona R."/>
            <person name="Hansman D."/>
            <person name="Paton J.C."/>
        </authorList>
    </citation>
    <scope>NUCLEOTIDE SEQUENCE [GENOMIC DNA]</scope>
    <source>
        <strain>Serotype 19F</strain>
    </source>
</reference>
<reference key="2">
    <citation type="journal article" date="1998" name="Mol. Microbiol.">
        <title>Recombinational exchanges at the capsular polysaccharide biosynthetic locus lead to frequent serotype changes among natural isolates of Streptococcus pneumoniae.</title>
        <authorList>
            <person name="Coffey T.J."/>
            <person name="Enright M.C."/>
            <person name="Daniels M."/>
            <person name="Morona J.K."/>
            <person name="Morona R."/>
            <person name="Hryniewicz W."/>
            <person name="Paton J.C."/>
            <person name="Spratt B.G."/>
        </authorList>
    </citation>
    <scope>NUCLEOTIDE SEQUENCE [GENOMIC DNA] OF 1-196</scope>
    <source>
        <strain>NCTC 11906 / Serotype 19F</strain>
        <strain>PO-329 / Serotype 19F</strain>
        <strain>SP-496 / Serotype 19F</strain>
        <strain>SP-GA71 / Serotype 19F</strain>
    </source>
</reference>
<reference key="3">
    <citation type="journal article" date="2000" name="Mol. Microbiol.">
        <title>Tyrosine phosphorylation of CpsD negatively regulates capsular polysaccharide biosynthesis in Streptococcus pneumoniae.</title>
        <authorList>
            <person name="Morona J.K."/>
            <person name="Paton J.C."/>
            <person name="Miller D.C."/>
            <person name="Morona R."/>
        </authorList>
    </citation>
    <scope>CHARACTERIZATION</scope>
    <source>
        <strain>Rx1-19F / Serotype 19F</strain>
    </source>
</reference>
<evidence type="ECO:0000305" key="1"/>
<organism>
    <name type="scientific">Streptococcus pneumoniae</name>
    <dbReference type="NCBI Taxonomy" id="1313"/>
    <lineage>
        <taxon>Bacteria</taxon>
        <taxon>Bacillati</taxon>
        <taxon>Bacillota</taxon>
        <taxon>Bacilli</taxon>
        <taxon>Lactobacillales</taxon>
        <taxon>Streptococcaceae</taxon>
        <taxon>Streptococcus</taxon>
    </lineage>
</organism>
<dbReference type="EC" id="2.7.10.2"/>
<dbReference type="EMBL" id="U09239">
    <property type="protein sequence ID" value="AAC44961.1"/>
    <property type="molecule type" value="Genomic_DNA"/>
</dbReference>
<dbReference type="EMBL" id="AF030367">
    <property type="protein sequence ID" value="AAC38719.1"/>
    <property type="molecule type" value="Genomic_DNA"/>
</dbReference>
<dbReference type="EMBL" id="AF030368">
    <property type="protein sequence ID" value="AAC38724.1"/>
    <property type="molecule type" value="Genomic_DNA"/>
</dbReference>
<dbReference type="EMBL" id="AF030370">
    <property type="protein sequence ID" value="AAC38733.1"/>
    <property type="molecule type" value="Genomic_DNA"/>
</dbReference>
<dbReference type="EMBL" id="AF030371">
    <property type="protein sequence ID" value="AAC38738.1"/>
    <property type="molecule type" value="Genomic_DNA"/>
</dbReference>
<dbReference type="RefSeq" id="WP_050128984.1">
    <property type="nucleotide sequence ID" value="NZ_CAJRMX010000004.1"/>
</dbReference>
<dbReference type="SMR" id="Q54520"/>
<dbReference type="UniPathway" id="UPA00934"/>
<dbReference type="GO" id="GO:0005737">
    <property type="term" value="C:cytoplasm"/>
    <property type="evidence" value="ECO:0007669"/>
    <property type="project" value="UniProtKB-SubCell"/>
</dbReference>
<dbReference type="GO" id="GO:0005886">
    <property type="term" value="C:plasma membrane"/>
    <property type="evidence" value="ECO:0007669"/>
    <property type="project" value="TreeGrafter"/>
</dbReference>
<dbReference type="GO" id="GO:0005524">
    <property type="term" value="F:ATP binding"/>
    <property type="evidence" value="ECO:0007669"/>
    <property type="project" value="UniProtKB-KW"/>
</dbReference>
<dbReference type="GO" id="GO:0004715">
    <property type="term" value="F:non-membrane spanning protein tyrosine kinase activity"/>
    <property type="evidence" value="ECO:0007669"/>
    <property type="project" value="UniProtKB-EC"/>
</dbReference>
<dbReference type="GO" id="GO:0045227">
    <property type="term" value="P:capsule polysaccharide biosynthetic process"/>
    <property type="evidence" value="ECO:0007669"/>
    <property type="project" value="UniProtKB-UniPathway"/>
</dbReference>
<dbReference type="CDD" id="cd05387">
    <property type="entry name" value="BY-kinase"/>
    <property type="match status" value="1"/>
</dbReference>
<dbReference type="Gene3D" id="3.40.50.300">
    <property type="entry name" value="P-loop containing nucleotide triphosphate hydrolases"/>
    <property type="match status" value="1"/>
</dbReference>
<dbReference type="InterPro" id="IPR025669">
    <property type="entry name" value="AAA_dom"/>
</dbReference>
<dbReference type="InterPro" id="IPR050445">
    <property type="entry name" value="Bact_polysacc_biosynth/exp"/>
</dbReference>
<dbReference type="InterPro" id="IPR027417">
    <property type="entry name" value="P-loop_NTPase"/>
</dbReference>
<dbReference type="InterPro" id="IPR005702">
    <property type="entry name" value="Wzc-like_C"/>
</dbReference>
<dbReference type="NCBIfam" id="TIGR01007">
    <property type="entry name" value="eps_fam"/>
    <property type="match status" value="1"/>
</dbReference>
<dbReference type="PANTHER" id="PTHR32309:SF13">
    <property type="entry name" value="FERRIC ENTEROBACTIN TRANSPORT PROTEIN FEPE"/>
    <property type="match status" value="1"/>
</dbReference>
<dbReference type="PANTHER" id="PTHR32309">
    <property type="entry name" value="TYROSINE-PROTEIN KINASE"/>
    <property type="match status" value="1"/>
</dbReference>
<dbReference type="Pfam" id="PF13614">
    <property type="entry name" value="AAA_31"/>
    <property type="match status" value="1"/>
</dbReference>
<dbReference type="SUPFAM" id="SSF52540">
    <property type="entry name" value="P-loop containing nucleoside triphosphate hydrolases"/>
    <property type="match status" value="1"/>
</dbReference>